<accession>Q5F5P1</accession>
<organism>
    <name type="scientific">Neisseria gonorrhoeae (strain ATCC 700825 / FA 1090)</name>
    <dbReference type="NCBI Taxonomy" id="242231"/>
    <lineage>
        <taxon>Bacteria</taxon>
        <taxon>Pseudomonadati</taxon>
        <taxon>Pseudomonadota</taxon>
        <taxon>Betaproteobacteria</taxon>
        <taxon>Neisseriales</taxon>
        <taxon>Neisseriaceae</taxon>
        <taxon>Neisseria</taxon>
    </lineage>
</organism>
<proteinExistence type="inferred from homology"/>
<name>PYRI_NEIG1</name>
<dbReference type="EMBL" id="AE004969">
    <property type="protein sequence ID" value="AAW90496.1"/>
    <property type="molecule type" value="Genomic_DNA"/>
</dbReference>
<dbReference type="RefSeq" id="WP_003690135.1">
    <property type="nucleotide sequence ID" value="NC_002946.2"/>
</dbReference>
<dbReference type="RefSeq" id="YP_208908.1">
    <property type="nucleotide sequence ID" value="NC_002946.2"/>
</dbReference>
<dbReference type="SMR" id="Q5F5P1"/>
<dbReference type="STRING" id="242231.NGO_1876"/>
<dbReference type="GeneID" id="66754252"/>
<dbReference type="KEGG" id="ngo:NGO_1876"/>
<dbReference type="PATRIC" id="fig|242231.10.peg.2255"/>
<dbReference type="HOGENOM" id="CLU_128576_0_0_4"/>
<dbReference type="Proteomes" id="UP000000535">
    <property type="component" value="Chromosome"/>
</dbReference>
<dbReference type="GO" id="GO:0009347">
    <property type="term" value="C:aspartate carbamoyltransferase complex"/>
    <property type="evidence" value="ECO:0007669"/>
    <property type="project" value="InterPro"/>
</dbReference>
<dbReference type="GO" id="GO:0046872">
    <property type="term" value="F:metal ion binding"/>
    <property type="evidence" value="ECO:0007669"/>
    <property type="project" value="UniProtKB-KW"/>
</dbReference>
<dbReference type="GO" id="GO:0006207">
    <property type="term" value="P:'de novo' pyrimidine nucleobase biosynthetic process"/>
    <property type="evidence" value="ECO:0007669"/>
    <property type="project" value="InterPro"/>
</dbReference>
<dbReference type="GO" id="GO:0006221">
    <property type="term" value="P:pyrimidine nucleotide biosynthetic process"/>
    <property type="evidence" value="ECO:0007669"/>
    <property type="project" value="UniProtKB-UniRule"/>
</dbReference>
<dbReference type="Gene3D" id="2.30.30.20">
    <property type="entry name" value="Aspartate carbamoyltransferase regulatory subunit, C-terminal domain"/>
    <property type="match status" value="1"/>
</dbReference>
<dbReference type="Gene3D" id="3.30.70.140">
    <property type="entry name" value="Aspartate carbamoyltransferase regulatory subunit, N-terminal domain"/>
    <property type="match status" value="1"/>
</dbReference>
<dbReference type="HAMAP" id="MF_00002">
    <property type="entry name" value="Asp_carb_tr_reg"/>
    <property type="match status" value="1"/>
</dbReference>
<dbReference type="InterPro" id="IPR020545">
    <property type="entry name" value="Asp_carbamoyltransf_reg_N"/>
</dbReference>
<dbReference type="InterPro" id="IPR002801">
    <property type="entry name" value="Asp_carbamoylTrfase_reg"/>
</dbReference>
<dbReference type="InterPro" id="IPR020542">
    <property type="entry name" value="Asp_carbamoyltrfase_reg_C"/>
</dbReference>
<dbReference type="InterPro" id="IPR036792">
    <property type="entry name" value="Asp_carbatrfase_reg_C_sf"/>
</dbReference>
<dbReference type="InterPro" id="IPR036793">
    <property type="entry name" value="Asp_carbatrfase_reg_N_sf"/>
</dbReference>
<dbReference type="NCBIfam" id="TIGR00240">
    <property type="entry name" value="ATCase_reg"/>
    <property type="match status" value="1"/>
</dbReference>
<dbReference type="PANTHER" id="PTHR35805">
    <property type="entry name" value="ASPARTATE CARBAMOYLTRANSFERASE REGULATORY CHAIN"/>
    <property type="match status" value="1"/>
</dbReference>
<dbReference type="PANTHER" id="PTHR35805:SF1">
    <property type="entry name" value="ASPARTATE CARBAMOYLTRANSFERASE REGULATORY CHAIN"/>
    <property type="match status" value="1"/>
</dbReference>
<dbReference type="Pfam" id="PF01948">
    <property type="entry name" value="PyrI"/>
    <property type="match status" value="1"/>
</dbReference>
<dbReference type="Pfam" id="PF02748">
    <property type="entry name" value="PyrI_C"/>
    <property type="match status" value="1"/>
</dbReference>
<dbReference type="SUPFAM" id="SSF57825">
    <property type="entry name" value="Aspartate carbamoyltransferase, Regulatory-chain, C-terminal domain"/>
    <property type="match status" value="1"/>
</dbReference>
<dbReference type="SUPFAM" id="SSF54893">
    <property type="entry name" value="Aspartate carbamoyltransferase, Regulatory-chain, N-terminal domain"/>
    <property type="match status" value="1"/>
</dbReference>
<comment type="function">
    <text evidence="1">Involved in allosteric regulation of aspartate carbamoyltransferase.</text>
</comment>
<comment type="cofactor">
    <cofactor evidence="1">
        <name>Zn(2+)</name>
        <dbReference type="ChEBI" id="CHEBI:29105"/>
    </cofactor>
    <text evidence="1">Binds 1 zinc ion per subunit.</text>
</comment>
<comment type="subunit">
    <text evidence="1">Contains catalytic and regulatory chains.</text>
</comment>
<comment type="similarity">
    <text evidence="1">Belongs to the PyrI family.</text>
</comment>
<sequence>MEAQKLSVEAIEKGTVIDHIPAGRGLTILRQFKLLHYGNAVTVGFNLPSKTQGSKDIIKIKGVCLDDKAADRLALFAPEAVVNTIDNFKVVQKRHLTLPDEIAEVFRCPNPNCAGHGEPVKSRFYVKKHNGQTRLKCHYCEKTYNRDSVAEA</sequence>
<gene>
    <name evidence="1" type="primary">pyrI</name>
    <name type="ordered locus">NGO_1876</name>
</gene>
<evidence type="ECO:0000255" key="1">
    <source>
        <dbReference type="HAMAP-Rule" id="MF_00002"/>
    </source>
</evidence>
<reference key="1">
    <citation type="submission" date="2003-03" db="EMBL/GenBank/DDBJ databases">
        <title>The complete genome sequence of Neisseria gonorrhoeae.</title>
        <authorList>
            <person name="Lewis L.A."/>
            <person name="Gillaspy A.F."/>
            <person name="McLaughlin R.E."/>
            <person name="Gipson M."/>
            <person name="Ducey T.F."/>
            <person name="Ownbey T."/>
            <person name="Hartman K."/>
            <person name="Nydick C."/>
            <person name="Carson M.B."/>
            <person name="Vaughn J."/>
            <person name="Thomson C."/>
            <person name="Song L."/>
            <person name="Lin S."/>
            <person name="Yuan X."/>
            <person name="Najar F."/>
            <person name="Zhan M."/>
            <person name="Ren Q."/>
            <person name="Zhu H."/>
            <person name="Qi S."/>
            <person name="Kenton S.M."/>
            <person name="Lai H."/>
            <person name="White J.D."/>
            <person name="Clifton S."/>
            <person name="Roe B.A."/>
            <person name="Dyer D.W."/>
        </authorList>
    </citation>
    <scope>NUCLEOTIDE SEQUENCE [LARGE SCALE GENOMIC DNA]</scope>
    <source>
        <strain>ATCC 700825 / FA 1090</strain>
    </source>
</reference>
<protein>
    <recommendedName>
        <fullName evidence="1">Aspartate carbamoyltransferase regulatory chain</fullName>
    </recommendedName>
</protein>
<keyword id="KW-0479">Metal-binding</keyword>
<keyword id="KW-0665">Pyrimidine biosynthesis</keyword>
<keyword id="KW-1185">Reference proteome</keyword>
<keyword id="KW-0862">Zinc</keyword>
<feature type="chain" id="PRO_1000000043" description="Aspartate carbamoyltransferase regulatory chain">
    <location>
        <begin position="1"/>
        <end position="152"/>
    </location>
</feature>
<feature type="binding site" evidence="1">
    <location>
        <position position="108"/>
    </location>
    <ligand>
        <name>Zn(2+)</name>
        <dbReference type="ChEBI" id="CHEBI:29105"/>
    </ligand>
</feature>
<feature type="binding site" evidence="1">
    <location>
        <position position="113"/>
    </location>
    <ligand>
        <name>Zn(2+)</name>
        <dbReference type="ChEBI" id="CHEBI:29105"/>
    </ligand>
</feature>
<feature type="binding site" evidence="1">
    <location>
        <position position="137"/>
    </location>
    <ligand>
        <name>Zn(2+)</name>
        <dbReference type="ChEBI" id="CHEBI:29105"/>
    </ligand>
</feature>
<feature type="binding site" evidence="1">
    <location>
        <position position="140"/>
    </location>
    <ligand>
        <name>Zn(2+)</name>
        <dbReference type="ChEBI" id="CHEBI:29105"/>
    </ligand>
</feature>